<reference evidence="3" key="1">
    <citation type="journal article" date="2009" name="J. Pept. Sci.">
        <title>Halocyntin and papillosin, two new antimicrobial peptides isolated from hemocytes of the solitary tunicate, Halocynthia papillosa.</title>
        <authorList>
            <person name="Galinier R."/>
            <person name="Roger E."/>
            <person name="Sautiere P.E."/>
            <person name="Aumelas A."/>
            <person name="Banaigs B."/>
            <person name="Mitta G."/>
        </authorList>
    </citation>
    <scope>PROTEIN SEQUENCE</scope>
    <scope>FUNCTION</scope>
    <scope>MASS SPECTROMETRY</scope>
    <source>
        <tissue evidence="1">Hemocyte</tissue>
    </source>
</reference>
<evidence type="ECO:0000269" key="1">
    <source>
    </source>
</evidence>
<evidence type="ECO:0000303" key="2">
    <source>
    </source>
</evidence>
<evidence type="ECO:0000305" key="3"/>
<organism>
    <name type="scientific">Halocynthia papillosa</name>
    <name type="common">Red sea-squirt</name>
    <dbReference type="NCBI Taxonomy" id="201963"/>
    <lineage>
        <taxon>Eukaryota</taxon>
        <taxon>Metazoa</taxon>
        <taxon>Chordata</taxon>
        <taxon>Tunicata</taxon>
        <taxon>Ascidiacea</taxon>
        <taxon>Stolidobranchia</taxon>
        <taxon>Pyuridae</taxon>
        <taxon>Halocynthia</taxon>
    </lineage>
</organism>
<proteinExistence type="evidence at protein level"/>
<name>HALCY_HALPP</name>
<accession>P86415</accession>
<comment type="function">
    <text evidence="1">Has strong antibacterial activity against the Gram-positive bacteria M.luteus, S.aureus, B.megaterium, A.viridans and E.faecalis, and against the Gram-negative bacterium K.pneumoniae. Has less potent antibacterial activity against the Gram-negative bacteria E.coli DH5alpha, S.typhimurium, P.aeruginosa, E.aerogenes and N.gonorrhoeae. Has moderate hemolytic activity against sheep erythrocytes.</text>
</comment>
<comment type="mass spectrometry"/>
<protein>
    <recommendedName>
        <fullName evidence="2">Halocyntin</fullName>
    </recommendedName>
</protein>
<feature type="peptide" id="PRO_0000390783" description="Halocyntin" evidence="1">
    <location>
        <begin position="1"/>
        <end position="26"/>
    </location>
</feature>
<keyword id="KW-0044">Antibiotic</keyword>
<keyword id="KW-0929">Antimicrobial</keyword>
<keyword id="KW-0204">Cytolysis</keyword>
<keyword id="KW-0903">Direct protein sequencing</keyword>
<keyword id="KW-0354">Hemolysis</keyword>
<dbReference type="GO" id="GO:0050829">
    <property type="term" value="P:defense response to Gram-negative bacterium"/>
    <property type="evidence" value="ECO:0000314"/>
    <property type="project" value="UniProtKB"/>
</dbReference>
<dbReference type="GO" id="GO:0050830">
    <property type="term" value="P:defense response to Gram-positive bacterium"/>
    <property type="evidence" value="ECO:0000314"/>
    <property type="project" value="UniProtKB"/>
</dbReference>
<dbReference type="GO" id="GO:0044179">
    <property type="term" value="P:hemolysis in another organism"/>
    <property type="evidence" value="ECO:0000314"/>
    <property type="project" value="UniProtKB"/>
</dbReference>
<sequence>FWGHIWNAVKRVGANALHGAVTGALS</sequence>